<evidence type="ECO:0000255" key="1">
    <source>
        <dbReference type="HAMAP-Rule" id="MF_00388"/>
    </source>
</evidence>
<keyword id="KW-0378">Hydrolase</keyword>
<keyword id="KW-0441">Lipid A biosynthesis</keyword>
<keyword id="KW-0444">Lipid biosynthesis</keyword>
<keyword id="KW-0443">Lipid metabolism</keyword>
<keyword id="KW-0479">Metal-binding</keyword>
<keyword id="KW-1185">Reference proteome</keyword>
<keyword id="KW-0862">Zinc</keyword>
<accession>A1WI31</accession>
<sequence>MLQQRSLKTLTRAVGVGLHSGQRVELTLRPAQPDTGIVFRRVDLPQPVDIPVRAEAVTDTRLASTIAQGSAKVHTVEHLMSACAGLGIDNLHVDITAEEVPILDGSSASFVFLLQSAGIVRQNAPKRFIRVTRPVQVREGEGADAKWAQLAPYHGYKLSFEIGFDHPAVDATGQRVEFDLGRGNYRRDIARARTFGFTRDVELMRANGLALGGGLDNAIVMDDYKVLNSDGLRYDDEFVKHKILDAMGDLHLLGKPLLAAYSAFRSGHALNNRLLRALLAQRDAWEVVTFEDERQAPGGFAQPAQAW</sequence>
<gene>
    <name evidence="1" type="primary">lpxC</name>
    <name type="ordered locus">Veis_1529</name>
</gene>
<feature type="chain" id="PRO_1000122829" description="UDP-3-O-acyl-N-acetylglucosamine deacetylase">
    <location>
        <begin position="1"/>
        <end position="307"/>
    </location>
</feature>
<feature type="active site" description="Proton donor" evidence="1">
    <location>
        <position position="268"/>
    </location>
</feature>
<feature type="binding site" evidence="1">
    <location>
        <position position="78"/>
    </location>
    <ligand>
        <name>Zn(2+)</name>
        <dbReference type="ChEBI" id="CHEBI:29105"/>
    </ligand>
</feature>
<feature type="binding site" evidence="1">
    <location>
        <position position="241"/>
    </location>
    <ligand>
        <name>Zn(2+)</name>
        <dbReference type="ChEBI" id="CHEBI:29105"/>
    </ligand>
</feature>
<feature type="binding site" evidence="1">
    <location>
        <position position="245"/>
    </location>
    <ligand>
        <name>Zn(2+)</name>
        <dbReference type="ChEBI" id="CHEBI:29105"/>
    </ligand>
</feature>
<reference key="1">
    <citation type="submission" date="2006-12" db="EMBL/GenBank/DDBJ databases">
        <title>Complete sequence of chromosome 1 of Verminephrobacter eiseniae EF01-2.</title>
        <authorList>
            <person name="Copeland A."/>
            <person name="Lucas S."/>
            <person name="Lapidus A."/>
            <person name="Barry K."/>
            <person name="Detter J.C."/>
            <person name="Glavina del Rio T."/>
            <person name="Dalin E."/>
            <person name="Tice H."/>
            <person name="Pitluck S."/>
            <person name="Chertkov O."/>
            <person name="Brettin T."/>
            <person name="Bruce D."/>
            <person name="Han C."/>
            <person name="Tapia R."/>
            <person name="Gilna P."/>
            <person name="Schmutz J."/>
            <person name="Larimer F."/>
            <person name="Land M."/>
            <person name="Hauser L."/>
            <person name="Kyrpides N."/>
            <person name="Kim E."/>
            <person name="Stahl D."/>
            <person name="Richardson P."/>
        </authorList>
    </citation>
    <scope>NUCLEOTIDE SEQUENCE [LARGE SCALE GENOMIC DNA]</scope>
    <source>
        <strain>EF01-2</strain>
    </source>
</reference>
<name>LPXC_VEREI</name>
<comment type="function">
    <text evidence="1">Catalyzes the hydrolysis of UDP-3-O-myristoyl-N-acetylglucosamine to form UDP-3-O-myristoylglucosamine and acetate, the committed step in lipid A biosynthesis.</text>
</comment>
<comment type="catalytic activity">
    <reaction evidence="1">
        <text>a UDP-3-O-[(3R)-3-hydroxyacyl]-N-acetyl-alpha-D-glucosamine + H2O = a UDP-3-O-[(3R)-3-hydroxyacyl]-alpha-D-glucosamine + acetate</text>
        <dbReference type="Rhea" id="RHEA:67816"/>
        <dbReference type="ChEBI" id="CHEBI:15377"/>
        <dbReference type="ChEBI" id="CHEBI:30089"/>
        <dbReference type="ChEBI" id="CHEBI:137740"/>
        <dbReference type="ChEBI" id="CHEBI:173225"/>
        <dbReference type="EC" id="3.5.1.108"/>
    </reaction>
</comment>
<comment type="cofactor">
    <cofactor evidence="1">
        <name>Zn(2+)</name>
        <dbReference type="ChEBI" id="CHEBI:29105"/>
    </cofactor>
</comment>
<comment type="pathway">
    <text evidence="1">Glycolipid biosynthesis; lipid IV(A) biosynthesis; lipid IV(A) from (3R)-3-hydroxytetradecanoyl-[acyl-carrier-protein] and UDP-N-acetyl-alpha-D-glucosamine: step 2/6.</text>
</comment>
<comment type="similarity">
    <text evidence="1">Belongs to the LpxC family.</text>
</comment>
<proteinExistence type="inferred from homology"/>
<dbReference type="EC" id="3.5.1.108" evidence="1"/>
<dbReference type="EMBL" id="CP000542">
    <property type="protein sequence ID" value="ABM57288.1"/>
    <property type="molecule type" value="Genomic_DNA"/>
</dbReference>
<dbReference type="RefSeq" id="WP_011809295.1">
    <property type="nucleotide sequence ID" value="NC_008786.1"/>
</dbReference>
<dbReference type="SMR" id="A1WI31"/>
<dbReference type="STRING" id="391735.Veis_1529"/>
<dbReference type="GeneID" id="76460148"/>
<dbReference type="KEGG" id="vei:Veis_1529"/>
<dbReference type="eggNOG" id="COG0774">
    <property type="taxonomic scope" value="Bacteria"/>
</dbReference>
<dbReference type="HOGENOM" id="CLU_046528_1_0_4"/>
<dbReference type="OrthoDB" id="9802746at2"/>
<dbReference type="UniPathway" id="UPA00359">
    <property type="reaction ID" value="UER00478"/>
</dbReference>
<dbReference type="Proteomes" id="UP000000374">
    <property type="component" value="Chromosome"/>
</dbReference>
<dbReference type="GO" id="GO:0016020">
    <property type="term" value="C:membrane"/>
    <property type="evidence" value="ECO:0007669"/>
    <property type="project" value="GOC"/>
</dbReference>
<dbReference type="GO" id="GO:0046872">
    <property type="term" value="F:metal ion binding"/>
    <property type="evidence" value="ECO:0007669"/>
    <property type="project" value="UniProtKB-KW"/>
</dbReference>
<dbReference type="GO" id="GO:0103117">
    <property type="term" value="F:UDP-3-O-acyl-N-acetylglucosamine deacetylase activity"/>
    <property type="evidence" value="ECO:0007669"/>
    <property type="project" value="UniProtKB-UniRule"/>
</dbReference>
<dbReference type="GO" id="GO:0009245">
    <property type="term" value="P:lipid A biosynthetic process"/>
    <property type="evidence" value="ECO:0007669"/>
    <property type="project" value="UniProtKB-UniRule"/>
</dbReference>
<dbReference type="Gene3D" id="3.30.230.20">
    <property type="entry name" value="lpxc deacetylase, domain 1"/>
    <property type="match status" value="1"/>
</dbReference>
<dbReference type="Gene3D" id="3.30.1700.10">
    <property type="entry name" value="lpxc deacetylase, domain 2"/>
    <property type="match status" value="1"/>
</dbReference>
<dbReference type="HAMAP" id="MF_00388">
    <property type="entry name" value="LpxC"/>
    <property type="match status" value="1"/>
</dbReference>
<dbReference type="InterPro" id="IPR020568">
    <property type="entry name" value="Ribosomal_Su5_D2-typ_SF"/>
</dbReference>
<dbReference type="InterPro" id="IPR004463">
    <property type="entry name" value="UDP-acyl_GlcNac_deAcase"/>
</dbReference>
<dbReference type="InterPro" id="IPR011334">
    <property type="entry name" value="UDP-acyl_GlcNac_deAcase_C"/>
</dbReference>
<dbReference type="InterPro" id="IPR015870">
    <property type="entry name" value="UDP-acyl_N-AcGlcN_deAcase_N"/>
</dbReference>
<dbReference type="NCBIfam" id="TIGR00325">
    <property type="entry name" value="lpxC"/>
    <property type="match status" value="1"/>
</dbReference>
<dbReference type="PANTHER" id="PTHR33694">
    <property type="entry name" value="UDP-3-O-ACYL-N-ACETYLGLUCOSAMINE DEACETYLASE 1, MITOCHONDRIAL-RELATED"/>
    <property type="match status" value="1"/>
</dbReference>
<dbReference type="PANTHER" id="PTHR33694:SF1">
    <property type="entry name" value="UDP-3-O-ACYL-N-ACETYLGLUCOSAMINE DEACETYLASE 1, MITOCHONDRIAL-RELATED"/>
    <property type="match status" value="1"/>
</dbReference>
<dbReference type="Pfam" id="PF03331">
    <property type="entry name" value="LpxC"/>
    <property type="match status" value="1"/>
</dbReference>
<dbReference type="SUPFAM" id="SSF54211">
    <property type="entry name" value="Ribosomal protein S5 domain 2-like"/>
    <property type="match status" value="2"/>
</dbReference>
<protein>
    <recommendedName>
        <fullName evidence="1">UDP-3-O-acyl-N-acetylglucosamine deacetylase</fullName>
        <shortName evidence="1">UDP-3-O-acyl-GlcNAc deacetylase</shortName>
        <ecNumber evidence="1">3.5.1.108</ecNumber>
    </recommendedName>
    <alternativeName>
        <fullName evidence="1">UDP-3-O-[R-3-hydroxymyristoyl]-N-acetylglucosamine deacetylase</fullName>
    </alternativeName>
</protein>
<organism>
    <name type="scientific">Verminephrobacter eiseniae (strain EF01-2)</name>
    <dbReference type="NCBI Taxonomy" id="391735"/>
    <lineage>
        <taxon>Bacteria</taxon>
        <taxon>Pseudomonadati</taxon>
        <taxon>Pseudomonadota</taxon>
        <taxon>Betaproteobacteria</taxon>
        <taxon>Burkholderiales</taxon>
        <taxon>Comamonadaceae</taxon>
        <taxon>Verminephrobacter</taxon>
    </lineage>
</organism>